<accession>Q1B439</accession>
<gene>
    <name evidence="1" type="primary">eno</name>
    <name type="ordered locus">Mmcs_4240</name>
</gene>
<reference key="1">
    <citation type="submission" date="2006-06" db="EMBL/GenBank/DDBJ databases">
        <title>Complete sequence of chromosome of Mycobacterium sp. MCS.</title>
        <authorList>
            <consortium name="US DOE Joint Genome Institute"/>
            <person name="Copeland A."/>
            <person name="Lucas S."/>
            <person name="Lapidus A."/>
            <person name="Barry K."/>
            <person name="Detter J.C."/>
            <person name="Glavina del Rio T."/>
            <person name="Hammon N."/>
            <person name="Israni S."/>
            <person name="Dalin E."/>
            <person name="Tice H."/>
            <person name="Pitluck S."/>
            <person name="Martinez M."/>
            <person name="Schmutz J."/>
            <person name="Larimer F."/>
            <person name="Land M."/>
            <person name="Hauser L."/>
            <person name="Kyrpides N."/>
            <person name="Kim E."/>
            <person name="Miller C.D."/>
            <person name="Hughes J.E."/>
            <person name="Anderson A.J."/>
            <person name="Sims R.C."/>
            <person name="Richardson P."/>
        </authorList>
    </citation>
    <scope>NUCLEOTIDE SEQUENCE [LARGE SCALE GENOMIC DNA]</scope>
    <source>
        <strain>MCS</strain>
    </source>
</reference>
<protein>
    <recommendedName>
        <fullName evidence="1">Enolase</fullName>
        <ecNumber evidence="1">4.2.1.11</ecNumber>
    </recommendedName>
    <alternativeName>
        <fullName evidence="1">2-phospho-D-glycerate hydro-lyase</fullName>
    </alternativeName>
    <alternativeName>
        <fullName evidence="1">2-phosphoglycerate dehydratase</fullName>
    </alternativeName>
</protein>
<name>ENO_MYCSS</name>
<comment type="function">
    <text evidence="1">Catalyzes the reversible conversion of 2-phosphoglycerate (2-PG) into phosphoenolpyruvate (PEP). It is essential for the degradation of carbohydrates via glycolysis.</text>
</comment>
<comment type="catalytic activity">
    <reaction evidence="1">
        <text>(2R)-2-phosphoglycerate = phosphoenolpyruvate + H2O</text>
        <dbReference type="Rhea" id="RHEA:10164"/>
        <dbReference type="ChEBI" id="CHEBI:15377"/>
        <dbReference type="ChEBI" id="CHEBI:58289"/>
        <dbReference type="ChEBI" id="CHEBI:58702"/>
        <dbReference type="EC" id="4.2.1.11"/>
    </reaction>
</comment>
<comment type="cofactor">
    <cofactor evidence="1">
        <name>Mg(2+)</name>
        <dbReference type="ChEBI" id="CHEBI:18420"/>
    </cofactor>
    <text evidence="1">Binds a second Mg(2+) ion via substrate during catalysis.</text>
</comment>
<comment type="pathway">
    <text evidence="1">Carbohydrate degradation; glycolysis; pyruvate from D-glyceraldehyde 3-phosphate: step 4/5.</text>
</comment>
<comment type="subcellular location">
    <subcellularLocation>
        <location evidence="1">Cytoplasm</location>
    </subcellularLocation>
    <subcellularLocation>
        <location evidence="1">Secreted</location>
    </subcellularLocation>
    <subcellularLocation>
        <location evidence="1">Cell surface</location>
    </subcellularLocation>
    <text evidence="1">Fractions of enolase are present in both the cytoplasm and on the cell surface.</text>
</comment>
<comment type="similarity">
    <text evidence="1">Belongs to the enolase family.</text>
</comment>
<proteinExistence type="inferred from homology"/>
<dbReference type="EC" id="4.2.1.11" evidence="1"/>
<dbReference type="EMBL" id="CP000384">
    <property type="protein sequence ID" value="ABG10345.1"/>
    <property type="molecule type" value="Genomic_DNA"/>
</dbReference>
<dbReference type="SMR" id="Q1B439"/>
<dbReference type="KEGG" id="mmc:Mmcs_4240"/>
<dbReference type="HOGENOM" id="CLU_031223_2_1_11"/>
<dbReference type="BioCyc" id="MSP164756:G1G6O-4330-MONOMER"/>
<dbReference type="UniPathway" id="UPA00109">
    <property type="reaction ID" value="UER00187"/>
</dbReference>
<dbReference type="GO" id="GO:0009986">
    <property type="term" value="C:cell surface"/>
    <property type="evidence" value="ECO:0007669"/>
    <property type="project" value="UniProtKB-SubCell"/>
</dbReference>
<dbReference type="GO" id="GO:0005576">
    <property type="term" value="C:extracellular region"/>
    <property type="evidence" value="ECO:0007669"/>
    <property type="project" value="UniProtKB-SubCell"/>
</dbReference>
<dbReference type="GO" id="GO:0000015">
    <property type="term" value="C:phosphopyruvate hydratase complex"/>
    <property type="evidence" value="ECO:0007669"/>
    <property type="project" value="InterPro"/>
</dbReference>
<dbReference type="GO" id="GO:0000287">
    <property type="term" value="F:magnesium ion binding"/>
    <property type="evidence" value="ECO:0007669"/>
    <property type="project" value="UniProtKB-UniRule"/>
</dbReference>
<dbReference type="GO" id="GO:0004634">
    <property type="term" value="F:phosphopyruvate hydratase activity"/>
    <property type="evidence" value="ECO:0007669"/>
    <property type="project" value="UniProtKB-UniRule"/>
</dbReference>
<dbReference type="GO" id="GO:0006096">
    <property type="term" value="P:glycolytic process"/>
    <property type="evidence" value="ECO:0007669"/>
    <property type="project" value="UniProtKB-UniRule"/>
</dbReference>
<dbReference type="CDD" id="cd03313">
    <property type="entry name" value="enolase"/>
    <property type="match status" value="1"/>
</dbReference>
<dbReference type="FunFam" id="3.20.20.120:FF:000001">
    <property type="entry name" value="Enolase"/>
    <property type="match status" value="1"/>
</dbReference>
<dbReference type="FunFam" id="3.30.390.10:FF:000001">
    <property type="entry name" value="Enolase"/>
    <property type="match status" value="1"/>
</dbReference>
<dbReference type="Gene3D" id="3.20.20.120">
    <property type="entry name" value="Enolase-like C-terminal domain"/>
    <property type="match status" value="1"/>
</dbReference>
<dbReference type="Gene3D" id="3.30.390.10">
    <property type="entry name" value="Enolase-like, N-terminal domain"/>
    <property type="match status" value="1"/>
</dbReference>
<dbReference type="HAMAP" id="MF_00318">
    <property type="entry name" value="Enolase"/>
    <property type="match status" value="1"/>
</dbReference>
<dbReference type="InterPro" id="IPR000941">
    <property type="entry name" value="Enolase"/>
</dbReference>
<dbReference type="InterPro" id="IPR036849">
    <property type="entry name" value="Enolase-like_C_sf"/>
</dbReference>
<dbReference type="InterPro" id="IPR029017">
    <property type="entry name" value="Enolase-like_N"/>
</dbReference>
<dbReference type="InterPro" id="IPR020810">
    <property type="entry name" value="Enolase_C"/>
</dbReference>
<dbReference type="InterPro" id="IPR020809">
    <property type="entry name" value="Enolase_CS"/>
</dbReference>
<dbReference type="InterPro" id="IPR020811">
    <property type="entry name" value="Enolase_N"/>
</dbReference>
<dbReference type="NCBIfam" id="TIGR01060">
    <property type="entry name" value="eno"/>
    <property type="match status" value="1"/>
</dbReference>
<dbReference type="PANTHER" id="PTHR11902">
    <property type="entry name" value="ENOLASE"/>
    <property type="match status" value="1"/>
</dbReference>
<dbReference type="PANTHER" id="PTHR11902:SF1">
    <property type="entry name" value="ENOLASE"/>
    <property type="match status" value="1"/>
</dbReference>
<dbReference type="Pfam" id="PF00113">
    <property type="entry name" value="Enolase_C"/>
    <property type="match status" value="1"/>
</dbReference>
<dbReference type="Pfam" id="PF03952">
    <property type="entry name" value="Enolase_N"/>
    <property type="match status" value="1"/>
</dbReference>
<dbReference type="PIRSF" id="PIRSF001400">
    <property type="entry name" value="Enolase"/>
    <property type="match status" value="1"/>
</dbReference>
<dbReference type="PRINTS" id="PR00148">
    <property type="entry name" value="ENOLASE"/>
</dbReference>
<dbReference type="SFLD" id="SFLDS00001">
    <property type="entry name" value="Enolase"/>
    <property type="match status" value="1"/>
</dbReference>
<dbReference type="SFLD" id="SFLDF00002">
    <property type="entry name" value="enolase"/>
    <property type="match status" value="1"/>
</dbReference>
<dbReference type="SMART" id="SM01192">
    <property type="entry name" value="Enolase_C"/>
    <property type="match status" value="1"/>
</dbReference>
<dbReference type="SMART" id="SM01193">
    <property type="entry name" value="Enolase_N"/>
    <property type="match status" value="1"/>
</dbReference>
<dbReference type="SUPFAM" id="SSF51604">
    <property type="entry name" value="Enolase C-terminal domain-like"/>
    <property type="match status" value="1"/>
</dbReference>
<dbReference type="SUPFAM" id="SSF54826">
    <property type="entry name" value="Enolase N-terminal domain-like"/>
    <property type="match status" value="1"/>
</dbReference>
<dbReference type="PROSITE" id="PS00164">
    <property type="entry name" value="ENOLASE"/>
    <property type="match status" value="1"/>
</dbReference>
<feature type="chain" id="PRO_0000267056" description="Enolase">
    <location>
        <begin position="1"/>
        <end position="429"/>
    </location>
</feature>
<feature type="active site" description="Proton donor" evidence="1">
    <location>
        <position position="204"/>
    </location>
</feature>
<feature type="active site" description="Proton acceptor" evidence="1">
    <location>
        <position position="335"/>
    </location>
</feature>
<feature type="binding site" evidence="1">
    <location>
        <position position="162"/>
    </location>
    <ligand>
        <name>(2R)-2-phosphoglycerate</name>
        <dbReference type="ChEBI" id="CHEBI:58289"/>
    </ligand>
</feature>
<feature type="binding site" evidence="1">
    <location>
        <position position="241"/>
    </location>
    <ligand>
        <name>Mg(2+)</name>
        <dbReference type="ChEBI" id="CHEBI:18420"/>
    </ligand>
</feature>
<feature type="binding site" evidence="1">
    <location>
        <position position="283"/>
    </location>
    <ligand>
        <name>Mg(2+)</name>
        <dbReference type="ChEBI" id="CHEBI:18420"/>
    </ligand>
</feature>
<feature type="binding site" evidence="1">
    <location>
        <position position="310"/>
    </location>
    <ligand>
        <name>Mg(2+)</name>
        <dbReference type="ChEBI" id="CHEBI:18420"/>
    </ligand>
</feature>
<feature type="binding site" evidence="1">
    <location>
        <position position="335"/>
    </location>
    <ligand>
        <name>(2R)-2-phosphoglycerate</name>
        <dbReference type="ChEBI" id="CHEBI:58289"/>
    </ligand>
</feature>
<feature type="binding site" evidence="1">
    <location>
        <position position="364"/>
    </location>
    <ligand>
        <name>(2R)-2-phosphoglycerate</name>
        <dbReference type="ChEBI" id="CHEBI:58289"/>
    </ligand>
</feature>
<feature type="binding site" evidence="1">
    <location>
        <position position="365"/>
    </location>
    <ligand>
        <name>(2R)-2-phosphoglycerate</name>
        <dbReference type="ChEBI" id="CHEBI:58289"/>
    </ligand>
</feature>
<feature type="binding site" evidence="1">
    <location>
        <position position="386"/>
    </location>
    <ligand>
        <name>(2R)-2-phosphoglycerate</name>
        <dbReference type="ChEBI" id="CHEBI:58289"/>
    </ligand>
</feature>
<keyword id="KW-0963">Cytoplasm</keyword>
<keyword id="KW-0324">Glycolysis</keyword>
<keyword id="KW-0456">Lyase</keyword>
<keyword id="KW-0460">Magnesium</keyword>
<keyword id="KW-0479">Metal-binding</keyword>
<keyword id="KW-0964">Secreted</keyword>
<organism>
    <name type="scientific">Mycobacterium sp. (strain MCS)</name>
    <dbReference type="NCBI Taxonomy" id="164756"/>
    <lineage>
        <taxon>Bacteria</taxon>
        <taxon>Bacillati</taxon>
        <taxon>Actinomycetota</taxon>
        <taxon>Actinomycetes</taxon>
        <taxon>Mycobacteriales</taxon>
        <taxon>Mycobacteriaceae</taxon>
        <taxon>Mycobacterium</taxon>
    </lineage>
</organism>
<evidence type="ECO:0000255" key="1">
    <source>
        <dbReference type="HAMAP-Rule" id="MF_00318"/>
    </source>
</evidence>
<sequence length="429" mass="45164">MPIIEQVGAREILDSRGNPTVEVELALTDGTFARAAVPSGASTGEHEAVELRDGGSRYGGKGVDKAVQAVLDDIAPAVIGMSADDQRLIDQALLDLDGTPDKSRLGANAILGVSLAVSKAAAESAGLPLFRYLGGPNAHILPVPMMNILNGGAHADTGVDVQEFMVAPIGAPSFKEALRWGAEVYHSLKSVLKKQGLSTGLGDEGGFAPDVAGTKAALDLISSAIEAAGFKLGTDVTLALDVAATEFYTEGTGYSFEKETRTAEQMAEFYASLLDAYPLVSIEDPLSEDDWDGWVSLTTQIGDRVQLVGDDLFVTNPERLEEGIERGAANALLVKVNQIGTLTETLDAVALAHNSGYRTMMSHRSGETEDTTIADLAVAVGSGQIKTGAPARSERVAKYNQLLRIEETLGDAARYAGDLAFPRFALETK</sequence>